<sequence>MNNNIINLVAAIILSLSIIFGWQYFVVKPEQKKQQQQIAVQKAENLKKQQLKALVEPATGIVVQEESQIQRIKIESESLTGSISLKGLRFDDLILKKYKQDLSKNSPEVRLFSPSNTENAYFAEIGLVSNLSSVKLPNNDTIWNSDSEILSPEKPVHLFWVNEDGVKFLVTITVDENYLFTIEQTIVNYSDKELPVQSYGLINRKYIAVEKAVNILHQGPIGCIDENLKEYSYDDIKDKKSEKFAASKVDWIGITDKYWLSSLIPDKSSNYSSNFNYALKQGTERYQVDFISPVQIIKPGENFSIKSRIFAGAKKVDLLDKYEKQYDIKLFDRAIDFGWFYIITKPVFYAMNFFYGYVGNFGVSILIVTVIIKLLMFTLANKSYRSMKKMKNLQPEIDRIKNLYSDDKARLNQEIMALYKKEKVNPVAGCLPILVQIPVFFSIYKVLYVTIEMRQTPFYGWIKDLSAPDPTTIFNLFGLLPFSPPSFLMIGAWPILMAITMFLQQKMSPEPADPMQAQVMKFMPLIFLFMFSSFPVGLLIYWSWNNILSIIQQYYINKFN</sequence>
<name>YIDC_RICM5</name>
<organism>
    <name type="scientific">Rickettsia massiliae (strain Mtu5)</name>
    <dbReference type="NCBI Taxonomy" id="416276"/>
    <lineage>
        <taxon>Bacteria</taxon>
        <taxon>Pseudomonadati</taxon>
        <taxon>Pseudomonadota</taxon>
        <taxon>Alphaproteobacteria</taxon>
        <taxon>Rickettsiales</taxon>
        <taxon>Rickettsiaceae</taxon>
        <taxon>Rickettsieae</taxon>
        <taxon>Rickettsia</taxon>
        <taxon>spotted fever group</taxon>
    </lineage>
</organism>
<accession>A8F0F4</accession>
<protein>
    <recommendedName>
        <fullName evidence="1">Membrane protein insertase YidC</fullName>
    </recommendedName>
    <alternativeName>
        <fullName evidence="1">Foldase YidC</fullName>
    </alternativeName>
    <alternativeName>
        <fullName evidence="1">Membrane integrase YidC</fullName>
    </alternativeName>
    <alternativeName>
        <fullName evidence="1">Membrane protein YidC</fullName>
    </alternativeName>
</protein>
<comment type="function">
    <text evidence="1">Required for the insertion and/or proper folding and/or complex formation of integral membrane proteins into the membrane. Involved in integration of membrane proteins that insert both dependently and independently of the Sec translocase complex, as well as at least some lipoproteins. Aids folding of multispanning membrane proteins.</text>
</comment>
<comment type="subunit">
    <text evidence="1">Interacts with the Sec translocase complex via SecD. Specifically interacts with transmembrane segments of nascent integral membrane proteins during membrane integration.</text>
</comment>
<comment type="subcellular location">
    <subcellularLocation>
        <location evidence="1">Cell inner membrane</location>
        <topology evidence="1">Multi-pass membrane protein</topology>
    </subcellularLocation>
</comment>
<comment type="similarity">
    <text evidence="1">Belongs to the OXA1/ALB3/YidC family. Type 1 subfamily.</text>
</comment>
<evidence type="ECO:0000255" key="1">
    <source>
        <dbReference type="HAMAP-Rule" id="MF_01810"/>
    </source>
</evidence>
<reference key="1">
    <citation type="journal article" date="2007" name="Genome Res.">
        <title>Lateral gene transfer between obligate intracellular bacteria: evidence from the Rickettsia massiliae genome.</title>
        <authorList>
            <person name="Blanc G."/>
            <person name="Ogata H."/>
            <person name="Robert C."/>
            <person name="Audic S."/>
            <person name="Claverie J.-M."/>
            <person name="Raoult D."/>
        </authorList>
    </citation>
    <scope>NUCLEOTIDE SEQUENCE [LARGE SCALE GENOMIC DNA]</scope>
    <source>
        <strain>Mtu5</strain>
    </source>
</reference>
<gene>
    <name evidence="1" type="primary">yidC</name>
    <name type="ordered locus">RMA_0080</name>
</gene>
<dbReference type="EMBL" id="CP000683">
    <property type="protein sequence ID" value="ABV84390.1"/>
    <property type="molecule type" value="Genomic_DNA"/>
</dbReference>
<dbReference type="RefSeq" id="WP_012152371.1">
    <property type="nucleotide sequence ID" value="NC_009900.1"/>
</dbReference>
<dbReference type="SMR" id="A8F0F4"/>
<dbReference type="KEGG" id="rms:RMA_0080"/>
<dbReference type="HOGENOM" id="CLU_016535_1_0_5"/>
<dbReference type="Proteomes" id="UP000001311">
    <property type="component" value="Chromosome"/>
</dbReference>
<dbReference type="GO" id="GO:0005886">
    <property type="term" value="C:plasma membrane"/>
    <property type="evidence" value="ECO:0007669"/>
    <property type="project" value="UniProtKB-SubCell"/>
</dbReference>
<dbReference type="GO" id="GO:0032977">
    <property type="term" value="F:membrane insertase activity"/>
    <property type="evidence" value="ECO:0007669"/>
    <property type="project" value="InterPro"/>
</dbReference>
<dbReference type="GO" id="GO:0051205">
    <property type="term" value="P:protein insertion into membrane"/>
    <property type="evidence" value="ECO:0007669"/>
    <property type="project" value="TreeGrafter"/>
</dbReference>
<dbReference type="GO" id="GO:0015031">
    <property type="term" value="P:protein transport"/>
    <property type="evidence" value="ECO:0007669"/>
    <property type="project" value="UniProtKB-KW"/>
</dbReference>
<dbReference type="CDD" id="cd20070">
    <property type="entry name" value="5TM_YidC_Alb3"/>
    <property type="match status" value="1"/>
</dbReference>
<dbReference type="CDD" id="cd19961">
    <property type="entry name" value="EcYidC-like_peri"/>
    <property type="match status" value="1"/>
</dbReference>
<dbReference type="Gene3D" id="2.70.98.90">
    <property type="match status" value="1"/>
</dbReference>
<dbReference type="HAMAP" id="MF_01810">
    <property type="entry name" value="YidC_type1"/>
    <property type="match status" value="1"/>
</dbReference>
<dbReference type="InterPro" id="IPR019998">
    <property type="entry name" value="Membr_insert_YidC"/>
</dbReference>
<dbReference type="InterPro" id="IPR028053">
    <property type="entry name" value="Membr_insert_YidC_N"/>
</dbReference>
<dbReference type="InterPro" id="IPR001708">
    <property type="entry name" value="YidC/ALB3/OXA1/COX18"/>
</dbReference>
<dbReference type="InterPro" id="IPR028055">
    <property type="entry name" value="YidC/Oxa/ALB_C"/>
</dbReference>
<dbReference type="InterPro" id="IPR047196">
    <property type="entry name" value="YidC_ALB_C"/>
</dbReference>
<dbReference type="InterPro" id="IPR038221">
    <property type="entry name" value="YidC_periplasmic_sf"/>
</dbReference>
<dbReference type="NCBIfam" id="NF002353">
    <property type="entry name" value="PRK01318.1-4"/>
    <property type="match status" value="1"/>
</dbReference>
<dbReference type="NCBIfam" id="TIGR03593">
    <property type="entry name" value="yidC_nterm"/>
    <property type="match status" value="1"/>
</dbReference>
<dbReference type="NCBIfam" id="TIGR03592">
    <property type="entry name" value="yidC_oxa1_cterm"/>
    <property type="match status" value="1"/>
</dbReference>
<dbReference type="PANTHER" id="PTHR12428:SF65">
    <property type="entry name" value="CYTOCHROME C OXIDASE ASSEMBLY PROTEIN COX18, MITOCHONDRIAL"/>
    <property type="match status" value="1"/>
</dbReference>
<dbReference type="PANTHER" id="PTHR12428">
    <property type="entry name" value="OXA1"/>
    <property type="match status" value="1"/>
</dbReference>
<dbReference type="Pfam" id="PF02096">
    <property type="entry name" value="60KD_IMP"/>
    <property type="match status" value="1"/>
</dbReference>
<dbReference type="Pfam" id="PF14849">
    <property type="entry name" value="YidC_periplas"/>
    <property type="match status" value="1"/>
</dbReference>
<dbReference type="PRINTS" id="PR00701">
    <property type="entry name" value="60KDINNERMP"/>
</dbReference>
<dbReference type="PRINTS" id="PR01900">
    <property type="entry name" value="YIDCPROTEIN"/>
</dbReference>
<proteinExistence type="inferred from homology"/>
<feature type="chain" id="PRO_1000070157" description="Membrane protein insertase YidC">
    <location>
        <begin position="1"/>
        <end position="560"/>
    </location>
</feature>
<feature type="transmembrane region" description="Helical" evidence="1">
    <location>
        <begin position="5"/>
        <end position="25"/>
    </location>
</feature>
<feature type="transmembrane region" description="Helical" evidence="1">
    <location>
        <begin position="334"/>
        <end position="354"/>
    </location>
</feature>
<feature type="transmembrane region" description="Helical" evidence="1">
    <location>
        <begin position="357"/>
        <end position="377"/>
    </location>
</feature>
<feature type="transmembrane region" description="Helical" evidence="1">
    <location>
        <begin position="431"/>
        <end position="451"/>
    </location>
</feature>
<feature type="transmembrane region" description="Helical" evidence="1">
    <location>
        <begin position="476"/>
        <end position="496"/>
    </location>
</feature>
<feature type="transmembrane region" description="Helical" evidence="1">
    <location>
        <begin position="522"/>
        <end position="542"/>
    </location>
</feature>
<keyword id="KW-0997">Cell inner membrane</keyword>
<keyword id="KW-1003">Cell membrane</keyword>
<keyword id="KW-0143">Chaperone</keyword>
<keyword id="KW-0472">Membrane</keyword>
<keyword id="KW-0653">Protein transport</keyword>
<keyword id="KW-0812">Transmembrane</keyword>
<keyword id="KW-1133">Transmembrane helix</keyword>
<keyword id="KW-0813">Transport</keyword>